<sequence>MRTEYCGQLRLSHVGQQVTLCGWVNRRRDLGSLIFIDMRDREGIVQVFFDPDRADALKLASELRNEFCIQVTGTVRARDEKNINRDMATGEIEVLASSLTIINRADVLPLDSNHVNTEEARLKYRYLDLRRPEMAQRLKTRAKITSLVRRFMDDHGFLDIETPMLTKATPEGARDYLVPSRVHKGKFYALPQSPQLFKQLLMMSGFDRYYQIVKCFRDEDLRADRQPEFTQIDVETSFMTAPQVREVMEALVRHLWLEVKGVDLGDFPVMTFAEAERRYGSDKPDLRNPMELTDVADLLKSVEFAVFAGPANDPKGRVAALRVPGGASLTRKQIDEYGNFVKIYGAKGLAYIKVNERAKGLEGINSPVAKFLNAEIIEAILDRTAAQDGDMIFFGADNKKIVADAMGALRLKVGKDLGLTDESKWAPLWVIDFPMFEDDGEGGLTAMHHPFTSPKDMTAAELKAAPENAVANAYDMVINGYEVGGGSVRIHNGDMQQTVFGILGINEEEQREKFGFLLDALKYGTPPHAGLAFGLDRLTMLLTGTDNIRDVIAFPKTTAAACLMTEAPSFANPTALAELSIQVVKKAENN</sequence>
<organism>
    <name type="scientific">Escherichia coli (strain 55989 / EAEC)</name>
    <dbReference type="NCBI Taxonomy" id="585055"/>
    <lineage>
        <taxon>Bacteria</taxon>
        <taxon>Pseudomonadati</taxon>
        <taxon>Pseudomonadota</taxon>
        <taxon>Gammaproteobacteria</taxon>
        <taxon>Enterobacterales</taxon>
        <taxon>Enterobacteriaceae</taxon>
        <taxon>Escherichia</taxon>
    </lineage>
</organism>
<keyword id="KW-0030">Aminoacyl-tRNA synthetase</keyword>
<keyword id="KW-0067">ATP-binding</keyword>
<keyword id="KW-0963">Cytoplasm</keyword>
<keyword id="KW-0436">Ligase</keyword>
<keyword id="KW-0547">Nucleotide-binding</keyword>
<keyword id="KW-0648">Protein biosynthesis</keyword>
<keyword id="KW-1185">Reference proteome</keyword>
<dbReference type="EC" id="6.1.1.12" evidence="1"/>
<dbReference type="EMBL" id="CU928145">
    <property type="protein sequence ID" value="CAU97903.1"/>
    <property type="molecule type" value="Genomic_DNA"/>
</dbReference>
<dbReference type="RefSeq" id="WP_001258662.1">
    <property type="nucleotide sequence ID" value="NC_011748.1"/>
</dbReference>
<dbReference type="SMR" id="B7L7R9"/>
<dbReference type="GeneID" id="75202728"/>
<dbReference type="KEGG" id="eck:EC55989_2045"/>
<dbReference type="HOGENOM" id="CLU_014330_3_2_6"/>
<dbReference type="Proteomes" id="UP000000746">
    <property type="component" value="Chromosome"/>
</dbReference>
<dbReference type="GO" id="GO:0005737">
    <property type="term" value="C:cytoplasm"/>
    <property type="evidence" value="ECO:0007669"/>
    <property type="project" value="UniProtKB-SubCell"/>
</dbReference>
<dbReference type="GO" id="GO:0004815">
    <property type="term" value="F:aspartate-tRNA ligase activity"/>
    <property type="evidence" value="ECO:0007669"/>
    <property type="project" value="UniProtKB-UniRule"/>
</dbReference>
<dbReference type="GO" id="GO:0005524">
    <property type="term" value="F:ATP binding"/>
    <property type="evidence" value="ECO:0007669"/>
    <property type="project" value="UniProtKB-UniRule"/>
</dbReference>
<dbReference type="GO" id="GO:0003676">
    <property type="term" value="F:nucleic acid binding"/>
    <property type="evidence" value="ECO:0007669"/>
    <property type="project" value="InterPro"/>
</dbReference>
<dbReference type="GO" id="GO:0006422">
    <property type="term" value="P:aspartyl-tRNA aminoacylation"/>
    <property type="evidence" value="ECO:0007669"/>
    <property type="project" value="UniProtKB-UniRule"/>
</dbReference>
<dbReference type="CDD" id="cd00777">
    <property type="entry name" value="AspRS_core"/>
    <property type="match status" value="1"/>
</dbReference>
<dbReference type="CDD" id="cd04317">
    <property type="entry name" value="EcAspRS_like_N"/>
    <property type="match status" value="1"/>
</dbReference>
<dbReference type="FunFam" id="2.40.50.140:FF:000080">
    <property type="entry name" value="Aspartate--tRNA ligase"/>
    <property type="match status" value="1"/>
</dbReference>
<dbReference type="FunFam" id="3.30.1360.30:FF:000001">
    <property type="entry name" value="Aspartate--tRNA ligase"/>
    <property type="match status" value="1"/>
</dbReference>
<dbReference type="Gene3D" id="3.30.930.10">
    <property type="entry name" value="Bira Bifunctional Protein, Domain 2"/>
    <property type="match status" value="1"/>
</dbReference>
<dbReference type="Gene3D" id="3.30.1360.30">
    <property type="entry name" value="GAD-like domain"/>
    <property type="match status" value="1"/>
</dbReference>
<dbReference type="Gene3D" id="2.40.50.140">
    <property type="entry name" value="Nucleic acid-binding proteins"/>
    <property type="match status" value="1"/>
</dbReference>
<dbReference type="HAMAP" id="MF_00044">
    <property type="entry name" value="Asp_tRNA_synth_type1"/>
    <property type="match status" value="1"/>
</dbReference>
<dbReference type="InterPro" id="IPR004364">
    <property type="entry name" value="Aa-tRNA-synt_II"/>
</dbReference>
<dbReference type="InterPro" id="IPR006195">
    <property type="entry name" value="aa-tRNA-synth_II"/>
</dbReference>
<dbReference type="InterPro" id="IPR045864">
    <property type="entry name" value="aa-tRNA-synth_II/BPL/LPL"/>
</dbReference>
<dbReference type="InterPro" id="IPR004524">
    <property type="entry name" value="Asp-tRNA-ligase_1"/>
</dbReference>
<dbReference type="InterPro" id="IPR047089">
    <property type="entry name" value="Asp-tRNA-ligase_1_N"/>
</dbReference>
<dbReference type="InterPro" id="IPR002312">
    <property type="entry name" value="Asp/Asn-tRNA-synth_IIb"/>
</dbReference>
<dbReference type="InterPro" id="IPR047090">
    <property type="entry name" value="AspRS_core"/>
</dbReference>
<dbReference type="InterPro" id="IPR004115">
    <property type="entry name" value="GAD-like_sf"/>
</dbReference>
<dbReference type="InterPro" id="IPR029351">
    <property type="entry name" value="GAD_dom"/>
</dbReference>
<dbReference type="InterPro" id="IPR012340">
    <property type="entry name" value="NA-bd_OB-fold"/>
</dbReference>
<dbReference type="InterPro" id="IPR004365">
    <property type="entry name" value="NA-bd_OB_tRNA"/>
</dbReference>
<dbReference type="NCBIfam" id="TIGR00459">
    <property type="entry name" value="aspS_bact"/>
    <property type="match status" value="1"/>
</dbReference>
<dbReference type="NCBIfam" id="NF001750">
    <property type="entry name" value="PRK00476.1"/>
    <property type="match status" value="1"/>
</dbReference>
<dbReference type="PANTHER" id="PTHR22594:SF5">
    <property type="entry name" value="ASPARTATE--TRNA LIGASE, MITOCHONDRIAL"/>
    <property type="match status" value="1"/>
</dbReference>
<dbReference type="PANTHER" id="PTHR22594">
    <property type="entry name" value="ASPARTYL/LYSYL-TRNA SYNTHETASE"/>
    <property type="match status" value="1"/>
</dbReference>
<dbReference type="Pfam" id="PF02938">
    <property type="entry name" value="GAD"/>
    <property type="match status" value="1"/>
</dbReference>
<dbReference type="Pfam" id="PF00152">
    <property type="entry name" value="tRNA-synt_2"/>
    <property type="match status" value="1"/>
</dbReference>
<dbReference type="Pfam" id="PF01336">
    <property type="entry name" value="tRNA_anti-codon"/>
    <property type="match status" value="1"/>
</dbReference>
<dbReference type="PRINTS" id="PR01042">
    <property type="entry name" value="TRNASYNTHASP"/>
</dbReference>
<dbReference type="SUPFAM" id="SSF55681">
    <property type="entry name" value="Class II aaRS and biotin synthetases"/>
    <property type="match status" value="1"/>
</dbReference>
<dbReference type="SUPFAM" id="SSF55261">
    <property type="entry name" value="GAD domain-like"/>
    <property type="match status" value="1"/>
</dbReference>
<dbReference type="SUPFAM" id="SSF50249">
    <property type="entry name" value="Nucleic acid-binding proteins"/>
    <property type="match status" value="1"/>
</dbReference>
<dbReference type="PROSITE" id="PS50862">
    <property type="entry name" value="AA_TRNA_LIGASE_II"/>
    <property type="match status" value="1"/>
</dbReference>
<comment type="function">
    <text evidence="1">Catalyzes the attachment of L-aspartate to tRNA(Asp) in a two-step reaction: L-aspartate is first activated by ATP to form Asp-AMP and then transferred to the acceptor end of tRNA(Asp).</text>
</comment>
<comment type="catalytic activity">
    <reaction evidence="1">
        <text>tRNA(Asp) + L-aspartate + ATP = L-aspartyl-tRNA(Asp) + AMP + diphosphate</text>
        <dbReference type="Rhea" id="RHEA:19649"/>
        <dbReference type="Rhea" id="RHEA-COMP:9660"/>
        <dbReference type="Rhea" id="RHEA-COMP:9678"/>
        <dbReference type="ChEBI" id="CHEBI:29991"/>
        <dbReference type="ChEBI" id="CHEBI:30616"/>
        <dbReference type="ChEBI" id="CHEBI:33019"/>
        <dbReference type="ChEBI" id="CHEBI:78442"/>
        <dbReference type="ChEBI" id="CHEBI:78516"/>
        <dbReference type="ChEBI" id="CHEBI:456215"/>
        <dbReference type="EC" id="6.1.1.12"/>
    </reaction>
</comment>
<comment type="subunit">
    <text evidence="1">Homodimer.</text>
</comment>
<comment type="subcellular location">
    <subcellularLocation>
        <location evidence="1">Cytoplasm</location>
    </subcellularLocation>
</comment>
<comment type="similarity">
    <text evidence="1">Belongs to the class-II aminoacyl-tRNA synthetase family. Type 1 subfamily.</text>
</comment>
<accession>B7L7R9</accession>
<protein>
    <recommendedName>
        <fullName evidence="1">Aspartate--tRNA ligase</fullName>
        <ecNumber evidence="1">6.1.1.12</ecNumber>
    </recommendedName>
    <alternativeName>
        <fullName evidence="1">Aspartyl-tRNA synthetase</fullName>
        <shortName evidence="1">AspRS</shortName>
    </alternativeName>
</protein>
<proteinExistence type="inferred from homology"/>
<gene>
    <name evidence="1" type="primary">aspS</name>
    <name type="ordered locus">EC55989_2045</name>
</gene>
<feature type="chain" id="PRO_1000198982" description="Aspartate--tRNA ligase">
    <location>
        <begin position="1"/>
        <end position="590"/>
    </location>
</feature>
<feature type="region of interest" description="Aspartate" evidence="1">
    <location>
        <begin position="195"/>
        <end position="198"/>
    </location>
</feature>
<feature type="binding site" evidence="1">
    <location>
        <position position="171"/>
    </location>
    <ligand>
        <name>L-aspartate</name>
        <dbReference type="ChEBI" id="CHEBI:29991"/>
    </ligand>
</feature>
<feature type="binding site" evidence="1">
    <location>
        <begin position="217"/>
        <end position="219"/>
    </location>
    <ligand>
        <name>ATP</name>
        <dbReference type="ChEBI" id="CHEBI:30616"/>
    </ligand>
</feature>
<feature type="binding site" evidence="1">
    <location>
        <position position="217"/>
    </location>
    <ligand>
        <name>L-aspartate</name>
        <dbReference type="ChEBI" id="CHEBI:29991"/>
    </ligand>
</feature>
<feature type="binding site" evidence="1">
    <location>
        <position position="226"/>
    </location>
    <ligand>
        <name>ATP</name>
        <dbReference type="ChEBI" id="CHEBI:30616"/>
    </ligand>
</feature>
<feature type="binding site" evidence="1">
    <location>
        <position position="448"/>
    </location>
    <ligand>
        <name>L-aspartate</name>
        <dbReference type="ChEBI" id="CHEBI:29991"/>
    </ligand>
</feature>
<feature type="binding site" evidence="1">
    <location>
        <position position="482"/>
    </location>
    <ligand>
        <name>ATP</name>
        <dbReference type="ChEBI" id="CHEBI:30616"/>
    </ligand>
</feature>
<feature type="binding site" evidence="1">
    <location>
        <position position="489"/>
    </location>
    <ligand>
        <name>L-aspartate</name>
        <dbReference type="ChEBI" id="CHEBI:29991"/>
    </ligand>
</feature>
<feature type="binding site" evidence="1">
    <location>
        <begin position="534"/>
        <end position="537"/>
    </location>
    <ligand>
        <name>ATP</name>
        <dbReference type="ChEBI" id="CHEBI:30616"/>
    </ligand>
</feature>
<name>SYD_ECO55</name>
<evidence type="ECO:0000255" key="1">
    <source>
        <dbReference type="HAMAP-Rule" id="MF_00044"/>
    </source>
</evidence>
<reference key="1">
    <citation type="journal article" date="2009" name="PLoS Genet.">
        <title>Organised genome dynamics in the Escherichia coli species results in highly diverse adaptive paths.</title>
        <authorList>
            <person name="Touchon M."/>
            <person name="Hoede C."/>
            <person name="Tenaillon O."/>
            <person name="Barbe V."/>
            <person name="Baeriswyl S."/>
            <person name="Bidet P."/>
            <person name="Bingen E."/>
            <person name="Bonacorsi S."/>
            <person name="Bouchier C."/>
            <person name="Bouvet O."/>
            <person name="Calteau A."/>
            <person name="Chiapello H."/>
            <person name="Clermont O."/>
            <person name="Cruveiller S."/>
            <person name="Danchin A."/>
            <person name="Diard M."/>
            <person name="Dossat C."/>
            <person name="Karoui M.E."/>
            <person name="Frapy E."/>
            <person name="Garry L."/>
            <person name="Ghigo J.M."/>
            <person name="Gilles A.M."/>
            <person name="Johnson J."/>
            <person name="Le Bouguenec C."/>
            <person name="Lescat M."/>
            <person name="Mangenot S."/>
            <person name="Martinez-Jehanne V."/>
            <person name="Matic I."/>
            <person name="Nassif X."/>
            <person name="Oztas S."/>
            <person name="Petit M.A."/>
            <person name="Pichon C."/>
            <person name="Rouy Z."/>
            <person name="Ruf C.S."/>
            <person name="Schneider D."/>
            <person name="Tourret J."/>
            <person name="Vacherie B."/>
            <person name="Vallenet D."/>
            <person name="Medigue C."/>
            <person name="Rocha E.P.C."/>
            <person name="Denamur E."/>
        </authorList>
    </citation>
    <scope>NUCLEOTIDE SEQUENCE [LARGE SCALE GENOMIC DNA]</scope>
    <source>
        <strain>55989 / EAEC</strain>
    </source>
</reference>